<comment type="function">
    <text evidence="1">Member of the two-component regulatory system WalK/WalR.</text>
</comment>
<comment type="subcellular location">
    <subcellularLocation>
        <location evidence="4">Cytoplasm</location>
    </subcellularLocation>
</comment>
<comment type="PTM">
    <text evidence="1">Phosphorylated by WalK.</text>
</comment>
<proteinExistence type="inferred from homology"/>
<accession>Q8CQK0</accession>
<accession>Q5G1P3</accession>
<protein>
    <recommendedName>
        <fullName evidence="4">Transcriptional regulatory protein WalR</fullName>
    </recommendedName>
</protein>
<dbReference type="EMBL" id="AY864801">
    <property type="protein sequence ID" value="AAW62233.1"/>
    <property type="molecule type" value="Genomic_DNA"/>
</dbReference>
<dbReference type="EMBL" id="AE015929">
    <property type="protein sequence ID" value="AAO03615.1"/>
    <property type="molecule type" value="Genomic_DNA"/>
</dbReference>
<dbReference type="RefSeq" id="NP_763573.1">
    <property type="nucleotide sequence ID" value="NC_004461.1"/>
</dbReference>
<dbReference type="RefSeq" id="WP_001831816.1">
    <property type="nucleotide sequence ID" value="NZ_WBME01000012.1"/>
</dbReference>
<dbReference type="SMR" id="Q8CQK0"/>
<dbReference type="GeneID" id="50017434"/>
<dbReference type="KEGG" id="sep:SE_0018"/>
<dbReference type="PATRIC" id="fig|176280.10.peg.18"/>
<dbReference type="eggNOG" id="COG0745">
    <property type="taxonomic scope" value="Bacteria"/>
</dbReference>
<dbReference type="HOGENOM" id="CLU_000445_30_4_9"/>
<dbReference type="OrthoDB" id="9790442at2"/>
<dbReference type="Proteomes" id="UP000001411">
    <property type="component" value="Chromosome"/>
</dbReference>
<dbReference type="GO" id="GO:0005829">
    <property type="term" value="C:cytosol"/>
    <property type="evidence" value="ECO:0007669"/>
    <property type="project" value="TreeGrafter"/>
</dbReference>
<dbReference type="GO" id="GO:0032993">
    <property type="term" value="C:protein-DNA complex"/>
    <property type="evidence" value="ECO:0007669"/>
    <property type="project" value="TreeGrafter"/>
</dbReference>
<dbReference type="GO" id="GO:0000156">
    <property type="term" value="F:phosphorelay response regulator activity"/>
    <property type="evidence" value="ECO:0007669"/>
    <property type="project" value="TreeGrafter"/>
</dbReference>
<dbReference type="GO" id="GO:0000976">
    <property type="term" value="F:transcription cis-regulatory region binding"/>
    <property type="evidence" value="ECO:0007669"/>
    <property type="project" value="TreeGrafter"/>
</dbReference>
<dbReference type="GO" id="GO:0006355">
    <property type="term" value="P:regulation of DNA-templated transcription"/>
    <property type="evidence" value="ECO:0007669"/>
    <property type="project" value="InterPro"/>
</dbReference>
<dbReference type="CDD" id="cd17614">
    <property type="entry name" value="REC_OmpR_YycF-like"/>
    <property type="match status" value="1"/>
</dbReference>
<dbReference type="CDD" id="cd00383">
    <property type="entry name" value="trans_reg_C"/>
    <property type="match status" value="1"/>
</dbReference>
<dbReference type="FunFam" id="1.10.10.10:FF:000089">
    <property type="entry name" value="Alkaline phosphatase synthesis response regulator"/>
    <property type="match status" value="1"/>
</dbReference>
<dbReference type="FunFam" id="3.40.50.2300:FF:000052">
    <property type="entry name" value="DNA-binding response regulator YycF"/>
    <property type="match status" value="1"/>
</dbReference>
<dbReference type="Gene3D" id="3.40.50.2300">
    <property type="match status" value="1"/>
</dbReference>
<dbReference type="Gene3D" id="6.10.250.690">
    <property type="match status" value="1"/>
</dbReference>
<dbReference type="Gene3D" id="1.10.10.10">
    <property type="entry name" value="Winged helix-like DNA-binding domain superfamily/Winged helix DNA-binding domain"/>
    <property type="match status" value="1"/>
</dbReference>
<dbReference type="InterPro" id="IPR011006">
    <property type="entry name" value="CheY-like_superfamily"/>
</dbReference>
<dbReference type="InterPro" id="IPR001867">
    <property type="entry name" value="OmpR/PhoB-type_DNA-bd"/>
</dbReference>
<dbReference type="InterPro" id="IPR047791">
    <property type="entry name" value="Resp_reg_WalR"/>
</dbReference>
<dbReference type="InterPro" id="IPR016032">
    <property type="entry name" value="Sig_transdc_resp-reg_C-effctor"/>
</dbReference>
<dbReference type="InterPro" id="IPR001789">
    <property type="entry name" value="Sig_transdc_resp-reg_receiver"/>
</dbReference>
<dbReference type="InterPro" id="IPR039420">
    <property type="entry name" value="WalR-like"/>
</dbReference>
<dbReference type="InterPro" id="IPR036388">
    <property type="entry name" value="WH-like_DNA-bd_sf"/>
</dbReference>
<dbReference type="NCBIfam" id="NF040534">
    <property type="entry name" value="resp_reg_YycF"/>
    <property type="match status" value="1"/>
</dbReference>
<dbReference type="PANTHER" id="PTHR48111:SF40">
    <property type="entry name" value="PHOSPHATE REGULON TRANSCRIPTIONAL REGULATORY PROTEIN PHOB"/>
    <property type="match status" value="1"/>
</dbReference>
<dbReference type="PANTHER" id="PTHR48111">
    <property type="entry name" value="REGULATOR OF RPOS"/>
    <property type="match status" value="1"/>
</dbReference>
<dbReference type="Pfam" id="PF00072">
    <property type="entry name" value="Response_reg"/>
    <property type="match status" value="1"/>
</dbReference>
<dbReference type="Pfam" id="PF00486">
    <property type="entry name" value="Trans_reg_C"/>
    <property type="match status" value="1"/>
</dbReference>
<dbReference type="SMART" id="SM00448">
    <property type="entry name" value="REC"/>
    <property type="match status" value="1"/>
</dbReference>
<dbReference type="SMART" id="SM00862">
    <property type="entry name" value="Trans_reg_C"/>
    <property type="match status" value="1"/>
</dbReference>
<dbReference type="SUPFAM" id="SSF46894">
    <property type="entry name" value="C-terminal effector domain of the bipartite response regulators"/>
    <property type="match status" value="1"/>
</dbReference>
<dbReference type="SUPFAM" id="SSF52172">
    <property type="entry name" value="CheY-like"/>
    <property type="match status" value="1"/>
</dbReference>
<dbReference type="PROSITE" id="PS51755">
    <property type="entry name" value="OMPR_PHOB"/>
    <property type="match status" value="1"/>
</dbReference>
<dbReference type="PROSITE" id="PS50110">
    <property type="entry name" value="RESPONSE_REGULATORY"/>
    <property type="match status" value="1"/>
</dbReference>
<organism>
    <name type="scientific">Staphylococcus epidermidis (strain ATCC 12228 / FDA PCI 1200)</name>
    <dbReference type="NCBI Taxonomy" id="176280"/>
    <lineage>
        <taxon>Bacteria</taxon>
        <taxon>Bacillati</taxon>
        <taxon>Bacillota</taxon>
        <taxon>Bacilli</taxon>
        <taxon>Bacillales</taxon>
        <taxon>Staphylococcaceae</taxon>
        <taxon>Staphylococcus</taxon>
    </lineage>
</organism>
<name>WALR_STAES</name>
<evidence type="ECO:0000250" key="1">
    <source>
        <dbReference type="UniProtKB" id="Q2G2U6"/>
    </source>
</evidence>
<evidence type="ECO:0000255" key="2">
    <source>
        <dbReference type="PROSITE-ProRule" id="PRU00169"/>
    </source>
</evidence>
<evidence type="ECO:0000255" key="3">
    <source>
        <dbReference type="PROSITE-ProRule" id="PRU01091"/>
    </source>
</evidence>
<evidence type="ECO:0000305" key="4"/>
<feature type="chain" id="PRO_0000353046" description="Transcriptional regulatory protein WalR">
    <location>
        <begin position="1"/>
        <end position="233"/>
    </location>
</feature>
<feature type="domain" description="Response regulatory" evidence="2">
    <location>
        <begin position="4"/>
        <end position="117"/>
    </location>
</feature>
<feature type="DNA-binding region" description="OmpR/PhoB-type" evidence="3">
    <location>
        <begin position="132"/>
        <end position="231"/>
    </location>
</feature>
<feature type="modified residue" description="4-aspartylphosphate" evidence="2">
    <location>
        <position position="53"/>
    </location>
</feature>
<gene>
    <name type="primary">walR</name>
    <name type="synonym">yycF</name>
    <name type="ordered locus">SE_0018</name>
</gene>
<reference key="1">
    <citation type="journal article" date="2006" name="BMC Microbiol.">
        <title>Structure-based discovery of inhibitors of the YycG histidine kinase: new chemical leads to combat Staphylococcus epidermidis infections.</title>
        <authorList>
            <person name="Qin Z.-Q."/>
            <person name="Zhang J."/>
            <person name="Xu B."/>
            <person name="Chen L."/>
            <person name="Wu Y."/>
            <person name="Yang X."/>
            <person name="Shen X."/>
            <person name="Molin S."/>
            <person name="Danchin A."/>
            <person name="Jiang H."/>
            <person name="Qu D."/>
        </authorList>
    </citation>
    <scope>NUCLEOTIDE SEQUENCE [GENOMIC DNA]</scope>
</reference>
<reference key="2">
    <citation type="journal article" date="2003" name="Mol. Microbiol.">
        <title>Genome-based analysis of virulence genes in a non-biofilm-forming Staphylococcus epidermidis strain (ATCC 12228).</title>
        <authorList>
            <person name="Zhang Y.-Q."/>
            <person name="Ren S.-X."/>
            <person name="Li H.-L."/>
            <person name="Wang Y.-X."/>
            <person name="Fu G."/>
            <person name="Yang J."/>
            <person name="Qin Z.-Q."/>
            <person name="Miao Y.-G."/>
            <person name="Wang W.-Y."/>
            <person name="Chen R.-S."/>
            <person name="Shen Y."/>
            <person name="Chen Z."/>
            <person name="Yuan Z.-H."/>
            <person name="Zhao G.-P."/>
            <person name="Qu D."/>
            <person name="Danchin A."/>
            <person name="Wen Y.-M."/>
        </authorList>
    </citation>
    <scope>NUCLEOTIDE SEQUENCE [LARGE SCALE GENOMIC DNA]</scope>
    <source>
        <strain>ATCC 12228 / FDA PCI 1200</strain>
    </source>
</reference>
<sequence>MARKVVVVDDEKPIADILEFNLKKEGYDVYCAYDGNDAVDLIYEEEPDIVLLDIMLPGRDGMEVCREVRKKYEMPIIMLTAKDSEIDKVLGLELGADDYVTKPFSTRELIARVKANLRRHYSQPAQEVSGATNEITIKDIVIYPDAYSIKKRGEDIELTHREFELFHYLSKHMGQVMTREHLLQTVWGYDYFGDVRTVDVTIRRLREKIEDDPSHPEYIVTRRGVGYFLQQHD</sequence>
<keyword id="KW-0010">Activator</keyword>
<keyword id="KW-0963">Cytoplasm</keyword>
<keyword id="KW-0238">DNA-binding</keyword>
<keyword id="KW-0597">Phosphoprotein</keyword>
<keyword id="KW-0804">Transcription</keyword>
<keyword id="KW-0805">Transcription regulation</keyword>
<keyword id="KW-0902">Two-component regulatory system</keyword>